<name>A70A_DROSI</name>
<comment type="function">
    <text>Represses female sexual receptivity and stimulates oviposition.</text>
</comment>
<comment type="subcellular location">
    <subcellularLocation>
        <location>Secreted</location>
    </subcellularLocation>
</comment>
<comment type="tissue specificity">
    <text>Main cells of the accessory glands of males (paragonial gland).</text>
</comment>
<evidence type="ECO:0000250" key="1"/>
<organism>
    <name type="scientific">Drosophila simulans</name>
    <name type="common">Fruit fly</name>
    <dbReference type="NCBI Taxonomy" id="7240"/>
    <lineage>
        <taxon>Eukaryota</taxon>
        <taxon>Metazoa</taxon>
        <taxon>Ecdysozoa</taxon>
        <taxon>Arthropoda</taxon>
        <taxon>Hexapoda</taxon>
        <taxon>Insecta</taxon>
        <taxon>Pterygota</taxon>
        <taxon>Neoptera</taxon>
        <taxon>Endopterygota</taxon>
        <taxon>Diptera</taxon>
        <taxon>Brachycera</taxon>
        <taxon>Muscomorpha</taxon>
        <taxon>Ephydroidea</taxon>
        <taxon>Drosophilidae</taxon>
        <taxon>Drosophila</taxon>
        <taxon>Sophophora</taxon>
    </lineage>
</organism>
<sequence>MKTLSLFLVLVCLLGLVQSWEWPWNRKPTKYPIPSPNPRDKWCRLNLGPAWGGRC</sequence>
<proteinExistence type="evidence at transcript level"/>
<gene>
    <name type="primary">Acp70A</name>
    <name type="synonym">AcpA</name>
    <name type="synonym">PAPB</name>
    <name type="ORF">GD14439</name>
</gene>
<dbReference type="EMBL" id="X99417">
    <property type="protein sequence ID" value="CAA67794.1"/>
    <property type="molecule type" value="Genomic_DNA"/>
</dbReference>
<dbReference type="EMBL" id="CM000363">
    <property type="protein sequence ID" value="EDX10339.1"/>
    <property type="molecule type" value="Genomic_DNA"/>
</dbReference>
<dbReference type="EMBL" id="AY459566">
    <property type="protein sequence ID" value="AAR23020.1"/>
    <property type="molecule type" value="Genomic_DNA"/>
</dbReference>
<dbReference type="SMR" id="P67807"/>
<dbReference type="STRING" id="7240.P67807"/>
<dbReference type="EnsemblMetazoa" id="FBtr0214349">
    <property type="protein sequence ID" value="FBpp0212841"/>
    <property type="gene ID" value="FBgn0021129"/>
</dbReference>
<dbReference type="EnsemblMetazoa" id="XM_002084718.4">
    <property type="protein sequence ID" value="XP_002084754.1"/>
    <property type="gene ID" value="LOC6737935"/>
</dbReference>
<dbReference type="GeneID" id="6737935"/>
<dbReference type="HOGENOM" id="CLU_3034552_0_0_1"/>
<dbReference type="OMA" id="PRDKWCR"/>
<dbReference type="OrthoDB" id="7840505at2759"/>
<dbReference type="PhylomeDB" id="P67807"/>
<dbReference type="Proteomes" id="UP000000304">
    <property type="component" value="Chromosome 3L"/>
</dbReference>
<dbReference type="Bgee" id="FBgn0021129">
    <property type="expression patterns" value="Expressed in male reproductive system and 2 other cell types or tissues"/>
</dbReference>
<dbReference type="GO" id="GO:0005576">
    <property type="term" value="C:extracellular region"/>
    <property type="evidence" value="ECO:0007669"/>
    <property type="project" value="UniProtKB-SubCell"/>
</dbReference>
<dbReference type="GO" id="GO:0005179">
    <property type="term" value="F:hormone activity"/>
    <property type="evidence" value="ECO:0007669"/>
    <property type="project" value="InterPro"/>
</dbReference>
<dbReference type="GO" id="GO:0046008">
    <property type="term" value="P:regulation of female receptivity, post-mating"/>
    <property type="evidence" value="ECO:0007669"/>
    <property type="project" value="InterPro"/>
</dbReference>
<dbReference type="InterPro" id="IPR012608">
    <property type="entry name" value="Sex_peptide"/>
</dbReference>
<dbReference type="Pfam" id="PF08138">
    <property type="entry name" value="Sex_peptide"/>
    <property type="match status" value="1"/>
</dbReference>
<protein>
    <recommendedName>
        <fullName>Accessory gland-specific peptide 70A</fullName>
    </recommendedName>
    <alternativeName>
        <fullName>Paragonial peptide B</fullName>
    </alternativeName>
    <alternativeName>
        <fullName>Sex peptide</fullName>
        <shortName>SP</shortName>
    </alternativeName>
</protein>
<keyword id="KW-0085">Behavior</keyword>
<keyword id="KW-1015">Disulfide bond</keyword>
<keyword id="KW-0379">Hydroxylation</keyword>
<keyword id="KW-1185">Reference proteome</keyword>
<keyword id="KW-0964">Secreted</keyword>
<keyword id="KW-0732">Signal</keyword>
<feature type="signal peptide" evidence="1">
    <location>
        <begin position="1"/>
        <end position="19"/>
    </location>
</feature>
<feature type="chain" id="PRO_0000020589" description="Accessory gland-specific peptide 70A">
    <location>
        <begin position="20"/>
        <end position="55"/>
    </location>
</feature>
<feature type="modified residue" description="Hydroxyproline" evidence="1">
    <location>
        <position position="28"/>
    </location>
</feature>
<feature type="modified residue" description="Hydroxyproline" evidence="1">
    <location>
        <position position="32"/>
    </location>
</feature>
<feature type="modified residue" description="Hydroxyproline" evidence="1">
    <location>
        <position position="34"/>
    </location>
</feature>
<feature type="modified residue" description="Hydroxyproline" evidence="1">
    <location>
        <position position="38"/>
    </location>
</feature>
<feature type="disulfide bond" evidence="1">
    <location>
        <begin position="43"/>
        <end position="55"/>
    </location>
</feature>
<accession>P67807</accession>
<accession>B4QJ08</accession>
<accession>O18666</accession>
<accession>Q6SE45</accession>
<reference key="1">
    <citation type="journal article" date="1997" name="Genetics">
        <title>Evolutionary history of the sex-peptide (Acp70A) gene region in Drosophila melanogaster.</title>
        <authorList>
            <person name="Cirera S."/>
            <person name="Aguade M.N."/>
        </authorList>
    </citation>
    <scope>NUCLEOTIDE SEQUENCE [GENOMIC DNA]</scope>
</reference>
<reference key="2">
    <citation type="journal article" date="2007" name="Nature">
        <title>Evolution of genes and genomes on the Drosophila phylogeny.</title>
        <authorList>
            <consortium name="Drosophila 12 genomes consortium"/>
        </authorList>
    </citation>
    <scope>NUCLEOTIDE SEQUENCE [LARGE SCALE GENOMIC DNA]</scope>
</reference>
<reference key="3">
    <citation type="journal article" date="2004" name="Genome Res.">
        <title>Patterns of evolutionary constraints in intronic and intergenic DNA of Drosophila.</title>
        <authorList>
            <person name="Halligan D.L."/>
            <person name="Eyre-Walker A."/>
            <person name="Andolfatto P."/>
            <person name="Keightley P.D."/>
        </authorList>
    </citation>
    <scope>NUCLEOTIDE SEQUENCE [GENOMIC DNA] OF 1-26</scope>
</reference>